<comment type="function">
    <text evidence="1">Catalyzes the epimerization of the S- and R-forms of NAD(P)HX, a damaged form of NAD(P)H that is a result of enzymatic or heat-dependent hydration. This is a prerequisite for the S-specific NAD(P)H-hydrate dehydratase to allow the repair of both epimers of NAD(P)HX.</text>
</comment>
<comment type="catalytic activity">
    <reaction>
        <text>(6R)-NADHX = (6S)-NADHX</text>
        <dbReference type="Rhea" id="RHEA:32215"/>
        <dbReference type="ChEBI" id="CHEBI:64074"/>
        <dbReference type="ChEBI" id="CHEBI:64075"/>
        <dbReference type="EC" id="5.1.99.6"/>
    </reaction>
</comment>
<comment type="catalytic activity">
    <reaction>
        <text>(6R)-NADPHX = (6S)-NADPHX</text>
        <dbReference type="Rhea" id="RHEA:32227"/>
        <dbReference type="ChEBI" id="CHEBI:64076"/>
        <dbReference type="ChEBI" id="CHEBI:64077"/>
        <dbReference type="EC" id="5.1.99.6"/>
    </reaction>
</comment>
<comment type="cofactor">
    <cofactor evidence="1">
        <name>K(+)</name>
        <dbReference type="ChEBI" id="CHEBI:29103"/>
    </cofactor>
    <text evidence="1">Binds 1 potassium ion per subunit.</text>
</comment>
<comment type="similarity">
    <text evidence="1">Belongs to the NnrE/AIBP family.</text>
</comment>
<dbReference type="EC" id="5.1.99.6"/>
<dbReference type="EMBL" id="CH379065">
    <property type="protein sequence ID" value="EAL31474.2"/>
    <property type="molecule type" value="Genomic_DNA"/>
</dbReference>
<dbReference type="SMR" id="Q29FV5"/>
<dbReference type="FunCoup" id="Q29FV5">
    <property type="interactions" value="1400"/>
</dbReference>
<dbReference type="STRING" id="46245.Q29FV5"/>
<dbReference type="eggNOG" id="KOG2585">
    <property type="taxonomic scope" value="Eukaryota"/>
</dbReference>
<dbReference type="HOGENOM" id="CLU_024853_3_0_1"/>
<dbReference type="InParanoid" id="Q29FV5"/>
<dbReference type="OMA" id="CHHMEIP"/>
<dbReference type="Proteomes" id="UP000001819">
    <property type="component" value="Unplaced"/>
</dbReference>
<dbReference type="GO" id="GO:0005739">
    <property type="term" value="C:mitochondrion"/>
    <property type="evidence" value="ECO:0007669"/>
    <property type="project" value="TreeGrafter"/>
</dbReference>
<dbReference type="GO" id="GO:0046872">
    <property type="term" value="F:metal ion binding"/>
    <property type="evidence" value="ECO:0007669"/>
    <property type="project" value="UniProtKB-KW"/>
</dbReference>
<dbReference type="GO" id="GO:0052856">
    <property type="term" value="F:NAD(P)HX epimerase activity"/>
    <property type="evidence" value="ECO:0007669"/>
    <property type="project" value="UniProtKB-UniRule"/>
</dbReference>
<dbReference type="GO" id="GO:0000166">
    <property type="term" value="F:nucleotide binding"/>
    <property type="evidence" value="ECO:0007669"/>
    <property type="project" value="UniProtKB-KW"/>
</dbReference>
<dbReference type="Gene3D" id="3.40.50.10260">
    <property type="entry name" value="YjeF N-terminal domain"/>
    <property type="match status" value="1"/>
</dbReference>
<dbReference type="HAMAP" id="MF_01966">
    <property type="entry name" value="NADHX_epimerase"/>
    <property type="match status" value="1"/>
</dbReference>
<dbReference type="InterPro" id="IPR004443">
    <property type="entry name" value="YjeF_N_dom"/>
</dbReference>
<dbReference type="InterPro" id="IPR036652">
    <property type="entry name" value="YjeF_N_dom_sf"/>
</dbReference>
<dbReference type="InterPro" id="IPR032976">
    <property type="entry name" value="YJEFN_prot_NAXE-like"/>
</dbReference>
<dbReference type="NCBIfam" id="TIGR00197">
    <property type="entry name" value="yjeF_nterm"/>
    <property type="match status" value="1"/>
</dbReference>
<dbReference type="PANTHER" id="PTHR13232">
    <property type="entry name" value="NAD(P)H-HYDRATE EPIMERASE"/>
    <property type="match status" value="1"/>
</dbReference>
<dbReference type="PANTHER" id="PTHR13232:SF10">
    <property type="entry name" value="NAD(P)H-HYDRATE EPIMERASE"/>
    <property type="match status" value="1"/>
</dbReference>
<dbReference type="Pfam" id="PF03853">
    <property type="entry name" value="YjeF_N"/>
    <property type="match status" value="1"/>
</dbReference>
<dbReference type="SUPFAM" id="SSF64153">
    <property type="entry name" value="YjeF N-terminal domain-like"/>
    <property type="match status" value="1"/>
</dbReference>
<dbReference type="PROSITE" id="PS51385">
    <property type="entry name" value="YJEF_N"/>
    <property type="match status" value="1"/>
</dbReference>
<gene>
    <name type="ORF">GA15549</name>
</gene>
<accession>Q29FV5</accession>
<name>NNRE_DROPS</name>
<proteinExistence type="inferred from homology"/>
<protein>
    <recommendedName>
        <fullName evidence="1">NAD(P)H-hydrate epimerase</fullName>
        <ecNumber>5.1.99.6</ecNumber>
    </recommendedName>
    <alternativeName>
        <fullName evidence="1">NAD(P)HX epimerase</fullName>
    </alternativeName>
</protein>
<feature type="chain" id="PRO_0000379430" description="NAD(P)H-hydrate epimerase">
    <location>
        <begin position="1"/>
        <end position="226"/>
    </location>
</feature>
<feature type="domain" description="YjeF N-terminal" evidence="1">
    <location>
        <begin position="10"/>
        <end position="215"/>
    </location>
</feature>
<feature type="binding site" evidence="1">
    <location>
        <begin position="58"/>
        <end position="62"/>
    </location>
    <ligand>
        <name>(6S)-NADPHX</name>
        <dbReference type="ChEBI" id="CHEBI:64076"/>
    </ligand>
</feature>
<feature type="binding site" evidence="1">
    <location>
        <position position="59"/>
    </location>
    <ligand>
        <name>K(+)</name>
        <dbReference type="ChEBI" id="CHEBI:29103"/>
    </ligand>
</feature>
<feature type="binding site" evidence="1">
    <location>
        <position position="123"/>
    </location>
    <ligand>
        <name>K(+)</name>
        <dbReference type="ChEBI" id="CHEBI:29103"/>
    </ligand>
</feature>
<feature type="binding site" evidence="1">
    <location>
        <begin position="127"/>
        <end position="133"/>
    </location>
    <ligand>
        <name>(6S)-NADPHX</name>
        <dbReference type="ChEBI" id="CHEBI:64076"/>
    </ligand>
</feature>
<feature type="binding site" evidence="1">
    <location>
        <position position="156"/>
    </location>
    <ligand>
        <name>(6S)-NADPHX</name>
        <dbReference type="ChEBI" id="CHEBI:64076"/>
    </ligand>
</feature>
<feature type="binding site" evidence="1">
    <location>
        <position position="159"/>
    </location>
    <ligand>
        <name>K(+)</name>
        <dbReference type="ChEBI" id="CHEBI:29103"/>
    </ligand>
</feature>
<sequence length="226" mass="25188">MVKYLSQSEAIELDLDLFEMFHVGQLMELAGLSCADAVAECFPAQTHPRVLVVCGPGNNGGDGLVCARHLSLMGYQPTVYYPKPTLMSLYENLTNQCHHMEIPSVKKCPSVSDAEEDYDLILDALFGFGFKPPVREDFVPLVKMMQETKVPIASVDIPSGWDVEKGKQSECDFEPKLLISLTAPKLCAEHFKGEHHYLGGRFVPPALQRKYQLNLPDYGSKLVVRL</sequence>
<organism>
    <name type="scientific">Drosophila pseudoobscura pseudoobscura</name>
    <name type="common">Fruit fly</name>
    <dbReference type="NCBI Taxonomy" id="46245"/>
    <lineage>
        <taxon>Eukaryota</taxon>
        <taxon>Metazoa</taxon>
        <taxon>Ecdysozoa</taxon>
        <taxon>Arthropoda</taxon>
        <taxon>Hexapoda</taxon>
        <taxon>Insecta</taxon>
        <taxon>Pterygota</taxon>
        <taxon>Neoptera</taxon>
        <taxon>Endopterygota</taxon>
        <taxon>Diptera</taxon>
        <taxon>Brachycera</taxon>
        <taxon>Muscomorpha</taxon>
        <taxon>Ephydroidea</taxon>
        <taxon>Drosophilidae</taxon>
        <taxon>Drosophila</taxon>
        <taxon>Sophophora</taxon>
    </lineage>
</organism>
<evidence type="ECO:0000255" key="1">
    <source>
        <dbReference type="HAMAP-Rule" id="MF_03159"/>
    </source>
</evidence>
<evidence type="ECO:0000312" key="2">
    <source>
        <dbReference type="EMBL" id="EAL31474.2"/>
    </source>
</evidence>
<reference evidence="2" key="1">
    <citation type="journal article" date="2005" name="Genome Res.">
        <title>Comparative genome sequencing of Drosophila pseudoobscura: chromosomal, gene, and cis-element evolution.</title>
        <authorList>
            <person name="Richards S."/>
            <person name="Liu Y."/>
            <person name="Bettencourt B.R."/>
            <person name="Hradecky P."/>
            <person name="Letovsky S."/>
            <person name="Nielsen R."/>
            <person name="Thornton K."/>
            <person name="Hubisz M.J."/>
            <person name="Chen R."/>
            <person name="Meisel R.P."/>
            <person name="Couronne O."/>
            <person name="Hua S."/>
            <person name="Smith M.A."/>
            <person name="Zhang P."/>
            <person name="Liu J."/>
            <person name="Bussemaker H.J."/>
            <person name="van Batenburg M.F."/>
            <person name="Howells S.L."/>
            <person name="Scherer S.E."/>
            <person name="Sodergren E."/>
            <person name="Matthews B.B."/>
            <person name="Crosby M.A."/>
            <person name="Schroeder A.J."/>
            <person name="Ortiz-Barrientos D."/>
            <person name="Rives C.M."/>
            <person name="Metzker M.L."/>
            <person name="Muzny D.M."/>
            <person name="Scott G."/>
            <person name="Steffen D."/>
            <person name="Wheeler D.A."/>
            <person name="Worley K.C."/>
            <person name="Havlak P."/>
            <person name="Durbin K.J."/>
            <person name="Egan A."/>
            <person name="Gill R."/>
            <person name="Hume J."/>
            <person name="Morgan M.B."/>
            <person name="Miner G."/>
            <person name="Hamilton C."/>
            <person name="Huang Y."/>
            <person name="Waldron L."/>
            <person name="Verduzco D."/>
            <person name="Clerc-Blankenburg K.P."/>
            <person name="Dubchak I."/>
            <person name="Noor M.A.F."/>
            <person name="Anderson W."/>
            <person name="White K.P."/>
            <person name="Clark A.G."/>
            <person name="Schaeffer S.W."/>
            <person name="Gelbart W.M."/>
            <person name="Weinstock G.M."/>
            <person name="Gibbs R.A."/>
        </authorList>
    </citation>
    <scope>NUCLEOTIDE SEQUENCE [LARGE SCALE GENOMIC DNA]</scope>
    <source>
        <strain>MV2-25 / Tucson 14011-0121.94</strain>
    </source>
</reference>
<keyword id="KW-0413">Isomerase</keyword>
<keyword id="KW-0479">Metal-binding</keyword>
<keyword id="KW-0520">NAD</keyword>
<keyword id="KW-0521">NADP</keyword>
<keyword id="KW-0547">Nucleotide-binding</keyword>
<keyword id="KW-0630">Potassium</keyword>
<keyword id="KW-1185">Reference proteome</keyword>